<gene>
    <name type="ordered locus">mma_3250</name>
</gene>
<evidence type="ECO:0000255" key="1">
    <source>
        <dbReference type="HAMAP-Rule" id="MF_00659"/>
    </source>
</evidence>
<proteinExistence type="inferred from homology"/>
<reference key="1">
    <citation type="journal article" date="2007" name="PLoS Genet.">
        <title>Genome analysis of Minibacterium massiliensis highlights the convergent evolution of water-living bacteria.</title>
        <authorList>
            <person name="Audic S."/>
            <person name="Robert C."/>
            <person name="Campagna B."/>
            <person name="Parinello H."/>
            <person name="Claverie J.-M."/>
            <person name="Raoult D."/>
            <person name="Drancourt M."/>
        </authorList>
    </citation>
    <scope>NUCLEOTIDE SEQUENCE [LARGE SCALE GENOMIC DNA]</scope>
    <source>
        <strain>Marseille</strain>
    </source>
</reference>
<dbReference type="EMBL" id="CP000269">
    <property type="protein sequence ID" value="ABR91803.1"/>
    <property type="molecule type" value="Genomic_DNA"/>
</dbReference>
<dbReference type="RefSeq" id="WP_012081093.1">
    <property type="nucleotide sequence ID" value="NC_009659.1"/>
</dbReference>
<dbReference type="SMR" id="A6T343"/>
<dbReference type="STRING" id="375286.mma_3250"/>
<dbReference type="KEGG" id="mms:mma_3250"/>
<dbReference type="eggNOG" id="COG2921">
    <property type="taxonomic scope" value="Bacteria"/>
</dbReference>
<dbReference type="HOGENOM" id="CLU_161438_1_2_4"/>
<dbReference type="OrthoDB" id="9793424at2"/>
<dbReference type="Proteomes" id="UP000006388">
    <property type="component" value="Chromosome"/>
</dbReference>
<dbReference type="Gene3D" id="3.30.70.260">
    <property type="match status" value="1"/>
</dbReference>
<dbReference type="HAMAP" id="MF_00659">
    <property type="entry name" value="UPF0250"/>
    <property type="match status" value="1"/>
</dbReference>
<dbReference type="InterPro" id="IPR007454">
    <property type="entry name" value="UPF0250_YbeD-like"/>
</dbReference>
<dbReference type="InterPro" id="IPR027471">
    <property type="entry name" value="YbeD-like_sf"/>
</dbReference>
<dbReference type="NCBIfam" id="NF002533">
    <property type="entry name" value="PRK02047.1"/>
    <property type="match status" value="1"/>
</dbReference>
<dbReference type="PANTHER" id="PTHR38036">
    <property type="entry name" value="UPF0250 PROTEIN YBED"/>
    <property type="match status" value="1"/>
</dbReference>
<dbReference type="PANTHER" id="PTHR38036:SF1">
    <property type="entry name" value="UPF0250 PROTEIN YBED"/>
    <property type="match status" value="1"/>
</dbReference>
<dbReference type="Pfam" id="PF04359">
    <property type="entry name" value="DUF493"/>
    <property type="match status" value="1"/>
</dbReference>
<dbReference type="SUPFAM" id="SSF117991">
    <property type="entry name" value="YbeD/HP0495-like"/>
    <property type="match status" value="1"/>
</dbReference>
<protein>
    <recommendedName>
        <fullName evidence="1">UPF0250 protein mma_3250</fullName>
    </recommendedName>
</protein>
<feature type="chain" id="PRO_1000061874" description="UPF0250 protein mma_3250">
    <location>
        <begin position="1"/>
        <end position="91"/>
    </location>
</feature>
<organism>
    <name type="scientific">Janthinobacterium sp. (strain Marseille)</name>
    <name type="common">Minibacterium massiliensis</name>
    <dbReference type="NCBI Taxonomy" id="375286"/>
    <lineage>
        <taxon>Bacteria</taxon>
        <taxon>Pseudomonadati</taxon>
        <taxon>Pseudomonadota</taxon>
        <taxon>Betaproteobacteria</taxon>
        <taxon>Burkholderiales</taxon>
        <taxon>Oxalobacteraceae</taxon>
        <taxon>Janthinobacterium</taxon>
    </lineage>
</organism>
<comment type="similarity">
    <text evidence="1">Belongs to the UPF0250 family.</text>
</comment>
<name>Y3250_JANMA</name>
<accession>A6T343</accession>
<sequence length="91" mass="10299">MSELDPTESLIEYPSDFPIKVMGLAHDQFVPTIIDVVVVHDPEFHEGRIEQRPSSAGNYLSLTVTVRATSREQLDNLYRALSSHPMVKYVL</sequence>